<accession>O13614</accession>
<sequence>MLIPKENRKAIHQALFQQGVLVAKKDFNLPKHPEVGVPNLQVIKACQSLDSRGYLKTRYNWGWFYYTLTNEGVEYLREYLHLPAEVVPATHKRQVRPAAPRAGRPEPRERSSAADAGYRRAEKKDDGAAPGGFAPSFRGGFGRPVAA</sequence>
<gene>
    <name type="primary">rps1002</name>
    <name type="synonym">rps10b</name>
    <name type="ORF">pi023</name>
    <name type="ORF">SPBP22H7.08</name>
</gene>
<protein>
    <recommendedName>
        <fullName evidence="4">Small ribosomal subunit protein eS10B</fullName>
    </recommendedName>
    <alternativeName>
        <fullName>40S ribosomal protein S10-B</fullName>
    </alternativeName>
</protein>
<evidence type="ECO:0000250" key="1">
    <source>
        <dbReference type="UniProtKB" id="P46784"/>
    </source>
</evidence>
<evidence type="ECO:0000256" key="2">
    <source>
        <dbReference type="SAM" id="MobiDB-lite"/>
    </source>
</evidence>
<evidence type="ECO:0000269" key="3">
    <source>
    </source>
</evidence>
<evidence type="ECO:0000305" key="4"/>
<proteinExistence type="evidence at protein level"/>
<organism>
    <name type="scientific">Schizosaccharomyces pombe (strain 972 / ATCC 24843)</name>
    <name type="common">Fission yeast</name>
    <dbReference type="NCBI Taxonomy" id="284812"/>
    <lineage>
        <taxon>Eukaryota</taxon>
        <taxon>Fungi</taxon>
        <taxon>Dikarya</taxon>
        <taxon>Ascomycota</taxon>
        <taxon>Taphrinomycotina</taxon>
        <taxon>Schizosaccharomycetes</taxon>
        <taxon>Schizosaccharomycetales</taxon>
        <taxon>Schizosaccharomycetaceae</taxon>
        <taxon>Schizosaccharomyces</taxon>
    </lineage>
</organism>
<dbReference type="EMBL" id="AB004535">
    <property type="protein sequence ID" value="BAA21402.1"/>
    <property type="molecule type" value="Genomic_DNA"/>
</dbReference>
<dbReference type="EMBL" id="CU329671">
    <property type="protein sequence ID" value="CAC37376.1"/>
    <property type="molecule type" value="Genomic_DNA"/>
</dbReference>
<dbReference type="RefSeq" id="NP_595605.1">
    <property type="nucleotide sequence ID" value="NM_001021500.2"/>
</dbReference>
<dbReference type="PDB" id="9AXT">
    <property type="method" value="EM"/>
    <property type="resolution" value="2.40 A"/>
    <property type="chains" value="AN=1-147"/>
</dbReference>
<dbReference type="PDB" id="9AXV">
    <property type="method" value="EM"/>
    <property type="resolution" value="2.40 A"/>
    <property type="chains" value="AN=1-147"/>
</dbReference>
<dbReference type="PDBsum" id="9AXT"/>
<dbReference type="PDBsum" id="9AXV"/>
<dbReference type="EMDB" id="EMD-43972"/>
<dbReference type="EMDB" id="EMD-43976"/>
<dbReference type="SMR" id="O13614"/>
<dbReference type="BioGRID" id="280335">
    <property type="interactions" value="4"/>
</dbReference>
<dbReference type="FunCoup" id="O13614">
    <property type="interactions" value="590"/>
</dbReference>
<dbReference type="IntAct" id="O13614">
    <property type="interactions" value="1"/>
</dbReference>
<dbReference type="STRING" id="284812.O13614"/>
<dbReference type="iPTMnet" id="O13614"/>
<dbReference type="PaxDb" id="4896-SPBP22H7.08.1"/>
<dbReference type="EnsemblFungi" id="SPBP22H7.08.1">
    <property type="protein sequence ID" value="SPBP22H7.08.1:pep"/>
    <property type="gene ID" value="SPBP22H7.08"/>
</dbReference>
<dbReference type="GeneID" id="3361259"/>
<dbReference type="KEGG" id="spo:3361259"/>
<dbReference type="PomBase" id="SPBP22H7.08">
    <property type="gene designation" value="rps1002"/>
</dbReference>
<dbReference type="VEuPathDB" id="FungiDB:SPBP22H7.08"/>
<dbReference type="eggNOG" id="KOG3344">
    <property type="taxonomic scope" value="Eukaryota"/>
</dbReference>
<dbReference type="HOGENOM" id="CLU_089349_0_1_1"/>
<dbReference type="InParanoid" id="O13614"/>
<dbReference type="OMA" id="YRRRDQE"/>
<dbReference type="PhylomeDB" id="O13614"/>
<dbReference type="Reactome" id="R-SPO-156827">
    <property type="pathway name" value="L13a-mediated translational silencing of Ceruloplasmin expression"/>
</dbReference>
<dbReference type="Reactome" id="R-SPO-1799339">
    <property type="pathway name" value="SRP-dependent cotranslational protein targeting to membrane"/>
</dbReference>
<dbReference type="Reactome" id="R-SPO-72649">
    <property type="pathway name" value="Translation initiation complex formation"/>
</dbReference>
<dbReference type="Reactome" id="R-SPO-72689">
    <property type="pathway name" value="Formation of a pool of free 40S subunits"/>
</dbReference>
<dbReference type="Reactome" id="R-SPO-72695">
    <property type="pathway name" value="Formation of the ternary complex, and subsequently, the 43S complex"/>
</dbReference>
<dbReference type="Reactome" id="R-SPO-72702">
    <property type="pathway name" value="Ribosomal scanning and start codon recognition"/>
</dbReference>
<dbReference type="Reactome" id="R-SPO-72706">
    <property type="pathway name" value="GTP hydrolysis and joining of the 60S ribosomal subunit"/>
</dbReference>
<dbReference type="Reactome" id="R-SPO-975956">
    <property type="pathway name" value="Nonsense Mediated Decay (NMD) independent of the Exon Junction Complex (EJC)"/>
</dbReference>
<dbReference type="Reactome" id="R-SPO-975957">
    <property type="pathway name" value="Nonsense Mediated Decay (NMD) enhanced by the Exon Junction Complex (EJC)"/>
</dbReference>
<dbReference type="PRO" id="PR:O13614"/>
<dbReference type="Proteomes" id="UP000002485">
    <property type="component" value="Chromosome II"/>
</dbReference>
<dbReference type="GO" id="GO:0005829">
    <property type="term" value="C:cytosol"/>
    <property type="evidence" value="ECO:0007005"/>
    <property type="project" value="PomBase"/>
</dbReference>
<dbReference type="GO" id="GO:0022627">
    <property type="term" value="C:cytosolic small ribosomal subunit"/>
    <property type="evidence" value="ECO:0000269"/>
    <property type="project" value="PomBase"/>
</dbReference>
<dbReference type="GO" id="GO:0003723">
    <property type="term" value="F:RNA binding"/>
    <property type="evidence" value="ECO:0000318"/>
    <property type="project" value="GO_Central"/>
</dbReference>
<dbReference type="GO" id="GO:0003735">
    <property type="term" value="F:structural constituent of ribosome"/>
    <property type="evidence" value="ECO:0000318"/>
    <property type="project" value="GO_Central"/>
</dbReference>
<dbReference type="GO" id="GO:0002181">
    <property type="term" value="P:cytoplasmic translation"/>
    <property type="evidence" value="ECO:0000266"/>
    <property type="project" value="PomBase"/>
</dbReference>
<dbReference type="FunFam" id="1.10.10.10:FF:000025">
    <property type="entry name" value="40S ribosomal protein S10"/>
    <property type="match status" value="1"/>
</dbReference>
<dbReference type="Gene3D" id="1.10.10.10">
    <property type="entry name" value="Winged helix-like DNA-binding domain superfamily/Winged helix DNA-binding domain"/>
    <property type="match status" value="1"/>
</dbReference>
<dbReference type="InterPro" id="IPR005326">
    <property type="entry name" value="Plectin_eS10_N"/>
</dbReference>
<dbReference type="InterPro" id="IPR037447">
    <property type="entry name" value="Ribosomal_eS10"/>
</dbReference>
<dbReference type="InterPro" id="IPR036388">
    <property type="entry name" value="WH-like_DNA-bd_sf"/>
</dbReference>
<dbReference type="PANTHER" id="PTHR12146">
    <property type="entry name" value="40S RIBOSOMAL PROTEIN S10"/>
    <property type="match status" value="1"/>
</dbReference>
<dbReference type="PANTHER" id="PTHR12146:SF0">
    <property type="entry name" value="RIBOSOMAL PROTEIN S10"/>
    <property type="match status" value="1"/>
</dbReference>
<dbReference type="Pfam" id="PF03501">
    <property type="entry name" value="S10_plectin"/>
    <property type="match status" value="1"/>
</dbReference>
<feature type="chain" id="PRO_0000116375" description="Small ribosomal subunit protein eS10B">
    <location>
        <begin position="1"/>
        <end position="147"/>
    </location>
</feature>
<feature type="region of interest" description="Disordered" evidence="2">
    <location>
        <begin position="90"/>
        <end position="147"/>
    </location>
</feature>
<feature type="compositionally biased region" description="Basic and acidic residues" evidence="2">
    <location>
        <begin position="103"/>
        <end position="127"/>
    </location>
</feature>
<comment type="function">
    <text evidence="1">Component of the ribosome, a large ribonucleoprotein complex responsible for the synthesis of proteins in the cell. The small ribosomal subunit (SSU) binds messenger RNAs (mRNAs) and translates the encoded message by selecting cognate aminoacyl-transfer RNA (tRNA) molecules. The large subunit (LSU) contains the ribosomal catalytic site termed the peptidyl transferase center (PTC), which catalyzes the formation of peptide bonds, thereby polymerizing the amino acids delivered by tRNAs into a polypeptide chain. The nascent polypeptides leave the ribosome through a tunnel in the LSU and interact with protein factors that function in enzymatic processing, targeting, and the membrane insertion of nascent chains at the exit of the ribosomal tunnel. eS10 plays a role as a positive regulator of the GCN2 kinase activity by stimulating GCN1-mediated GCN2 activation.</text>
</comment>
<comment type="subunit">
    <text evidence="1">Component of the small ribosomal subunit (SSU). Mature yeast ribosomes consist of a small (40S) and a large (60S) subunit. The 40S small subunit contains 1 molecule of ribosomal RNA (18S rRNA) and at least 33 different proteins. The large 60S subunit contains 3 rRNA molecules (25S, 5.8S and 5S rRNA) and at least 46 different proteins. eS10 interacts with GCN1 (via middle region); this interaction is direct and promotes GCN2 kinase activity.</text>
</comment>
<comment type="subcellular location">
    <subcellularLocation>
        <location evidence="3">Cytoplasm</location>
    </subcellularLocation>
</comment>
<comment type="miscellaneous">
    <text>There are 2 genes for eS10 in S.pombe.</text>
</comment>
<comment type="similarity">
    <text evidence="4">Belongs to the eukaryotic ribosomal protein eS10 family.</text>
</comment>
<reference key="1">
    <citation type="journal article" date="2000" name="Yeast">
        <title>A 38 kb segment containing the cdc2 gene from the left arm of fission yeast chromosome II: sequence analysis and characterization of the genomic DNA and cDNAs encoded on the segment.</title>
        <authorList>
            <person name="Machida M."/>
            <person name="Yamazaki S."/>
            <person name="Kunihiro S."/>
            <person name="Tanaka T."/>
            <person name="Kushida N."/>
            <person name="Jinno K."/>
            <person name="Haikawa Y."/>
            <person name="Yamazaki J."/>
            <person name="Yamamoto S."/>
            <person name="Sekine M."/>
            <person name="Oguchi A."/>
            <person name="Nagai Y."/>
            <person name="Sakai M."/>
            <person name="Aoki K."/>
            <person name="Ogura K."/>
            <person name="Kudoh Y."/>
            <person name="Kikuchi H."/>
            <person name="Zhang M.Q."/>
            <person name="Yanagida M."/>
        </authorList>
    </citation>
    <scope>NUCLEOTIDE SEQUENCE [LARGE SCALE GENOMIC DNA]</scope>
    <source>
        <strain>972 / ATCC 24843</strain>
    </source>
</reference>
<reference key="2">
    <citation type="journal article" date="2002" name="Nature">
        <title>The genome sequence of Schizosaccharomyces pombe.</title>
        <authorList>
            <person name="Wood V."/>
            <person name="Gwilliam R."/>
            <person name="Rajandream M.A."/>
            <person name="Lyne M.H."/>
            <person name="Lyne R."/>
            <person name="Stewart A."/>
            <person name="Sgouros J.G."/>
            <person name="Peat N."/>
            <person name="Hayles J."/>
            <person name="Baker S.G."/>
            <person name="Basham D."/>
            <person name="Bowman S."/>
            <person name="Brooks K."/>
            <person name="Brown D."/>
            <person name="Brown S."/>
            <person name="Chillingworth T."/>
            <person name="Churcher C.M."/>
            <person name="Collins M."/>
            <person name="Connor R."/>
            <person name="Cronin A."/>
            <person name="Davis P."/>
            <person name="Feltwell T."/>
            <person name="Fraser A."/>
            <person name="Gentles S."/>
            <person name="Goble A."/>
            <person name="Hamlin N."/>
            <person name="Harris D.E."/>
            <person name="Hidalgo J."/>
            <person name="Hodgson G."/>
            <person name="Holroyd S."/>
            <person name="Hornsby T."/>
            <person name="Howarth S."/>
            <person name="Huckle E.J."/>
            <person name="Hunt S."/>
            <person name="Jagels K."/>
            <person name="James K.D."/>
            <person name="Jones L."/>
            <person name="Jones M."/>
            <person name="Leather S."/>
            <person name="McDonald S."/>
            <person name="McLean J."/>
            <person name="Mooney P."/>
            <person name="Moule S."/>
            <person name="Mungall K.L."/>
            <person name="Murphy L.D."/>
            <person name="Niblett D."/>
            <person name="Odell C."/>
            <person name="Oliver K."/>
            <person name="O'Neil S."/>
            <person name="Pearson D."/>
            <person name="Quail M.A."/>
            <person name="Rabbinowitsch E."/>
            <person name="Rutherford K.M."/>
            <person name="Rutter S."/>
            <person name="Saunders D."/>
            <person name="Seeger K."/>
            <person name="Sharp S."/>
            <person name="Skelton J."/>
            <person name="Simmonds M.N."/>
            <person name="Squares R."/>
            <person name="Squares S."/>
            <person name="Stevens K."/>
            <person name="Taylor K."/>
            <person name="Taylor R.G."/>
            <person name="Tivey A."/>
            <person name="Walsh S.V."/>
            <person name="Warren T."/>
            <person name="Whitehead S."/>
            <person name="Woodward J.R."/>
            <person name="Volckaert G."/>
            <person name="Aert R."/>
            <person name="Robben J."/>
            <person name="Grymonprez B."/>
            <person name="Weltjens I."/>
            <person name="Vanstreels E."/>
            <person name="Rieger M."/>
            <person name="Schaefer M."/>
            <person name="Mueller-Auer S."/>
            <person name="Gabel C."/>
            <person name="Fuchs M."/>
            <person name="Duesterhoeft A."/>
            <person name="Fritzc C."/>
            <person name="Holzer E."/>
            <person name="Moestl D."/>
            <person name="Hilbert H."/>
            <person name="Borzym K."/>
            <person name="Langer I."/>
            <person name="Beck A."/>
            <person name="Lehrach H."/>
            <person name="Reinhardt R."/>
            <person name="Pohl T.M."/>
            <person name="Eger P."/>
            <person name="Zimmermann W."/>
            <person name="Wedler H."/>
            <person name="Wambutt R."/>
            <person name="Purnelle B."/>
            <person name="Goffeau A."/>
            <person name="Cadieu E."/>
            <person name="Dreano S."/>
            <person name="Gloux S."/>
            <person name="Lelaure V."/>
            <person name="Mottier S."/>
            <person name="Galibert F."/>
            <person name="Aves S.J."/>
            <person name="Xiang Z."/>
            <person name="Hunt C."/>
            <person name="Moore K."/>
            <person name="Hurst S.M."/>
            <person name="Lucas M."/>
            <person name="Rochet M."/>
            <person name="Gaillardin C."/>
            <person name="Tallada V.A."/>
            <person name="Garzon A."/>
            <person name="Thode G."/>
            <person name="Daga R.R."/>
            <person name="Cruzado L."/>
            <person name="Jimenez J."/>
            <person name="Sanchez M."/>
            <person name="del Rey F."/>
            <person name="Benito J."/>
            <person name="Dominguez A."/>
            <person name="Revuelta J.L."/>
            <person name="Moreno S."/>
            <person name="Armstrong J."/>
            <person name="Forsburg S.L."/>
            <person name="Cerutti L."/>
            <person name="Lowe T."/>
            <person name="McCombie W.R."/>
            <person name="Paulsen I."/>
            <person name="Potashkin J."/>
            <person name="Shpakovski G.V."/>
            <person name="Ussery D."/>
            <person name="Barrell B.G."/>
            <person name="Nurse P."/>
        </authorList>
    </citation>
    <scope>NUCLEOTIDE SEQUENCE [LARGE SCALE GENOMIC DNA]</scope>
    <source>
        <strain>972 / ATCC 24843</strain>
    </source>
</reference>
<reference key="3">
    <citation type="journal article" date="2006" name="Nat. Biotechnol.">
        <title>ORFeome cloning and global analysis of protein localization in the fission yeast Schizosaccharomyces pombe.</title>
        <authorList>
            <person name="Matsuyama A."/>
            <person name="Arai R."/>
            <person name="Yashiroda Y."/>
            <person name="Shirai A."/>
            <person name="Kamata A."/>
            <person name="Sekido S."/>
            <person name="Kobayashi Y."/>
            <person name="Hashimoto A."/>
            <person name="Hamamoto M."/>
            <person name="Hiraoka Y."/>
            <person name="Horinouchi S."/>
            <person name="Yoshida M."/>
        </authorList>
    </citation>
    <scope>SUBCELLULAR LOCATION [LARGE SCALE ANALYSIS]</scope>
</reference>
<keyword id="KW-0002">3D-structure</keyword>
<keyword id="KW-0963">Cytoplasm</keyword>
<keyword id="KW-1185">Reference proteome</keyword>
<keyword id="KW-0687">Ribonucleoprotein</keyword>
<keyword id="KW-0689">Ribosomal protein</keyword>
<name>RS10B_SCHPO</name>